<evidence type="ECO:0000255" key="1">
    <source>
        <dbReference type="HAMAP-Rule" id="MF_00387"/>
    </source>
</evidence>
<dbReference type="EC" id="2.3.1.129" evidence="1"/>
<dbReference type="EMBL" id="CP000267">
    <property type="protein sequence ID" value="ABD69725.1"/>
    <property type="molecule type" value="Genomic_DNA"/>
</dbReference>
<dbReference type="RefSeq" id="WP_011464293.1">
    <property type="nucleotide sequence ID" value="NC_007908.1"/>
</dbReference>
<dbReference type="SMR" id="Q21WX8"/>
<dbReference type="STRING" id="338969.Rfer_2000"/>
<dbReference type="KEGG" id="rfr:Rfer_2000"/>
<dbReference type="eggNOG" id="COG1043">
    <property type="taxonomic scope" value="Bacteria"/>
</dbReference>
<dbReference type="HOGENOM" id="CLU_061249_0_0_4"/>
<dbReference type="OrthoDB" id="9807278at2"/>
<dbReference type="UniPathway" id="UPA00359">
    <property type="reaction ID" value="UER00477"/>
</dbReference>
<dbReference type="Proteomes" id="UP000008332">
    <property type="component" value="Chromosome"/>
</dbReference>
<dbReference type="GO" id="GO:0005737">
    <property type="term" value="C:cytoplasm"/>
    <property type="evidence" value="ECO:0007669"/>
    <property type="project" value="UniProtKB-SubCell"/>
</dbReference>
<dbReference type="GO" id="GO:0016020">
    <property type="term" value="C:membrane"/>
    <property type="evidence" value="ECO:0007669"/>
    <property type="project" value="GOC"/>
</dbReference>
<dbReference type="GO" id="GO:0008780">
    <property type="term" value="F:acyl-[acyl-carrier-protein]-UDP-N-acetylglucosamine O-acyltransferase activity"/>
    <property type="evidence" value="ECO:0007669"/>
    <property type="project" value="UniProtKB-UniRule"/>
</dbReference>
<dbReference type="GO" id="GO:0009245">
    <property type="term" value="P:lipid A biosynthetic process"/>
    <property type="evidence" value="ECO:0007669"/>
    <property type="project" value="UniProtKB-UniRule"/>
</dbReference>
<dbReference type="CDD" id="cd03351">
    <property type="entry name" value="LbH_UDP-GlcNAc_AT"/>
    <property type="match status" value="1"/>
</dbReference>
<dbReference type="Gene3D" id="2.160.10.10">
    <property type="entry name" value="Hexapeptide repeat proteins"/>
    <property type="match status" value="1"/>
</dbReference>
<dbReference type="Gene3D" id="1.20.1180.10">
    <property type="entry name" value="Udp N-acetylglucosamine O-acyltransferase, C-terminal domain"/>
    <property type="match status" value="1"/>
</dbReference>
<dbReference type="HAMAP" id="MF_00387">
    <property type="entry name" value="LpxA"/>
    <property type="match status" value="1"/>
</dbReference>
<dbReference type="InterPro" id="IPR029098">
    <property type="entry name" value="Acetyltransf_C"/>
</dbReference>
<dbReference type="InterPro" id="IPR037157">
    <property type="entry name" value="Acetyltransf_C_sf"/>
</dbReference>
<dbReference type="InterPro" id="IPR001451">
    <property type="entry name" value="Hexapep"/>
</dbReference>
<dbReference type="InterPro" id="IPR010137">
    <property type="entry name" value="Lipid_A_LpxA"/>
</dbReference>
<dbReference type="InterPro" id="IPR011004">
    <property type="entry name" value="Trimer_LpxA-like_sf"/>
</dbReference>
<dbReference type="NCBIfam" id="TIGR01852">
    <property type="entry name" value="lipid_A_lpxA"/>
    <property type="match status" value="1"/>
</dbReference>
<dbReference type="NCBIfam" id="NF003657">
    <property type="entry name" value="PRK05289.1"/>
    <property type="match status" value="1"/>
</dbReference>
<dbReference type="PANTHER" id="PTHR43480">
    <property type="entry name" value="ACYL-[ACYL-CARRIER-PROTEIN]--UDP-N-ACETYLGLUCOSAMINE O-ACYLTRANSFERASE"/>
    <property type="match status" value="1"/>
</dbReference>
<dbReference type="PANTHER" id="PTHR43480:SF1">
    <property type="entry name" value="ACYL-[ACYL-CARRIER-PROTEIN]--UDP-N-ACETYLGLUCOSAMINE O-ACYLTRANSFERASE, MITOCHONDRIAL-RELATED"/>
    <property type="match status" value="1"/>
</dbReference>
<dbReference type="Pfam" id="PF13720">
    <property type="entry name" value="Acetyltransf_11"/>
    <property type="match status" value="1"/>
</dbReference>
<dbReference type="Pfam" id="PF00132">
    <property type="entry name" value="Hexapep"/>
    <property type="match status" value="1"/>
</dbReference>
<dbReference type="PIRSF" id="PIRSF000456">
    <property type="entry name" value="UDP-GlcNAc_acltr"/>
    <property type="match status" value="1"/>
</dbReference>
<dbReference type="SUPFAM" id="SSF51161">
    <property type="entry name" value="Trimeric LpxA-like enzymes"/>
    <property type="match status" value="1"/>
</dbReference>
<protein>
    <recommendedName>
        <fullName evidence="1">Acyl-[acyl-carrier-protein]--UDP-N-acetylglucosamine O-acyltransferase</fullName>
        <shortName evidence="1">UDP-N-acetylglucosamine acyltransferase</shortName>
        <ecNumber evidence="1">2.3.1.129</ecNumber>
    </recommendedName>
</protein>
<accession>Q21WX8</accession>
<sequence length="264" mass="28736">MTTIHATAIVDSQAQLDSSVTVGPYSLIGPNVKVGAGTTIGPHCVIEGHTTIGRDNRIFQFSSLGAIPQDKKYAGEPCELVIGDRNTIREFCTFNIGSPGDLGVTRVGDDNWLMAYVHLAHDCVVGNKTIFANNSQLAGHVHVGDWAILGGFTVVHQFVKIGAHSMTALCTVLLADLPPFVMCQGQPAQARSMNYEGLRRRGFSPERIAVVKAMHKALYRESLTLQLARERIADLVKNSPESLPDVEMMLLFLEQTSPQRGIVR</sequence>
<name>LPXA_ALBFT</name>
<reference key="1">
    <citation type="submission" date="2006-02" db="EMBL/GenBank/DDBJ databases">
        <title>Complete sequence of chromosome of Rhodoferax ferrireducens DSM 15236.</title>
        <authorList>
            <person name="Copeland A."/>
            <person name="Lucas S."/>
            <person name="Lapidus A."/>
            <person name="Barry K."/>
            <person name="Detter J.C."/>
            <person name="Glavina del Rio T."/>
            <person name="Hammon N."/>
            <person name="Israni S."/>
            <person name="Pitluck S."/>
            <person name="Brettin T."/>
            <person name="Bruce D."/>
            <person name="Han C."/>
            <person name="Tapia R."/>
            <person name="Gilna P."/>
            <person name="Kiss H."/>
            <person name="Schmutz J."/>
            <person name="Larimer F."/>
            <person name="Land M."/>
            <person name="Kyrpides N."/>
            <person name="Ivanova N."/>
            <person name="Richardson P."/>
        </authorList>
    </citation>
    <scope>NUCLEOTIDE SEQUENCE [LARGE SCALE GENOMIC DNA]</scope>
    <source>
        <strain>ATCC BAA-621 / DSM 15236 / T118</strain>
    </source>
</reference>
<gene>
    <name evidence="1" type="primary">lpxA</name>
    <name type="ordered locus">Rfer_2000</name>
</gene>
<proteinExistence type="inferred from homology"/>
<keyword id="KW-0012">Acyltransferase</keyword>
<keyword id="KW-0963">Cytoplasm</keyword>
<keyword id="KW-0441">Lipid A biosynthesis</keyword>
<keyword id="KW-0444">Lipid biosynthesis</keyword>
<keyword id="KW-0443">Lipid metabolism</keyword>
<keyword id="KW-1185">Reference proteome</keyword>
<keyword id="KW-0677">Repeat</keyword>
<keyword id="KW-0808">Transferase</keyword>
<organism>
    <name type="scientific">Albidiferax ferrireducens (strain ATCC BAA-621 / DSM 15236 / T118)</name>
    <name type="common">Rhodoferax ferrireducens</name>
    <dbReference type="NCBI Taxonomy" id="338969"/>
    <lineage>
        <taxon>Bacteria</taxon>
        <taxon>Pseudomonadati</taxon>
        <taxon>Pseudomonadota</taxon>
        <taxon>Betaproteobacteria</taxon>
        <taxon>Burkholderiales</taxon>
        <taxon>Comamonadaceae</taxon>
        <taxon>Rhodoferax</taxon>
    </lineage>
</organism>
<comment type="function">
    <text evidence="1">Involved in the biosynthesis of lipid A, a phosphorylated glycolipid that anchors the lipopolysaccharide to the outer membrane of the cell.</text>
</comment>
<comment type="catalytic activity">
    <reaction evidence="1">
        <text>a (3R)-hydroxyacyl-[ACP] + UDP-N-acetyl-alpha-D-glucosamine = a UDP-3-O-[(3R)-3-hydroxyacyl]-N-acetyl-alpha-D-glucosamine + holo-[ACP]</text>
        <dbReference type="Rhea" id="RHEA:67812"/>
        <dbReference type="Rhea" id="RHEA-COMP:9685"/>
        <dbReference type="Rhea" id="RHEA-COMP:9945"/>
        <dbReference type="ChEBI" id="CHEBI:57705"/>
        <dbReference type="ChEBI" id="CHEBI:64479"/>
        <dbReference type="ChEBI" id="CHEBI:78827"/>
        <dbReference type="ChEBI" id="CHEBI:173225"/>
        <dbReference type="EC" id="2.3.1.129"/>
    </reaction>
</comment>
<comment type="pathway">
    <text evidence="1">Glycolipid biosynthesis; lipid IV(A) biosynthesis; lipid IV(A) from (3R)-3-hydroxytetradecanoyl-[acyl-carrier-protein] and UDP-N-acetyl-alpha-D-glucosamine: step 1/6.</text>
</comment>
<comment type="subunit">
    <text evidence="1">Homotrimer.</text>
</comment>
<comment type="subcellular location">
    <subcellularLocation>
        <location evidence="1">Cytoplasm</location>
    </subcellularLocation>
</comment>
<comment type="similarity">
    <text evidence="1">Belongs to the transferase hexapeptide repeat family. LpxA subfamily.</text>
</comment>
<feature type="chain" id="PRO_1000013176" description="Acyl-[acyl-carrier-protein]--UDP-N-acetylglucosamine O-acyltransferase">
    <location>
        <begin position="1"/>
        <end position="264"/>
    </location>
</feature>